<feature type="chain" id="PRO_1000060957" description="Nucleoside triphosphate pyrophosphatase">
    <location>
        <begin position="1"/>
        <end position="186"/>
    </location>
</feature>
<feature type="active site" description="Proton acceptor" evidence="1">
    <location>
        <position position="68"/>
    </location>
</feature>
<comment type="function">
    <text evidence="1">Nucleoside triphosphate pyrophosphatase. May have a dual role in cell division arrest and in preventing the incorporation of modified nucleotides into cellular nucleic acids.</text>
</comment>
<comment type="catalytic activity">
    <reaction evidence="1">
        <text>a ribonucleoside 5'-triphosphate + H2O = a ribonucleoside 5'-phosphate + diphosphate + H(+)</text>
        <dbReference type="Rhea" id="RHEA:23996"/>
        <dbReference type="ChEBI" id="CHEBI:15377"/>
        <dbReference type="ChEBI" id="CHEBI:15378"/>
        <dbReference type="ChEBI" id="CHEBI:33019"/>
        <dbReference type="ChEBI" id="CHEBI:58043"/>
        <dbReference type="ChEBI" id="CHEBI:61557"/>
        <dbReference type="EC" id="3.6.1.9"/>
    </reaction>
</comment>
<comment type="catalytic activity">
    <reaction evidence="1">
        <text>a 2'-deoxyribonucleoside 5'-triphosphate + H2O = a 2'-deoxyribonucleoside 5'-phosphate + diphosphate + H(+)</text>
        <dbReference type="Rhea" id="RHEA:44644"/>
        <dbReference type="ChEBI" id="CHEBI:15377"/>
        <dbReference type="ChEBI" id="CHEBI:15378"/>
        <dbReference type="ChEBI" id="CHEBI:33019"/>
        <dbReference type="ChEBI" id="CHEBI:61560"/>
        <dbReference type="ChEBI" id="CHEBI:65317"/>
        <dbReference type="EC" id="3.6.1.9"/>
    </reaction>
</comment>
<comment type="cofactor">
    <cofactor evidence="1">
        <name>a divalent metal cation</name>
        <dbReference type="ChEBI" id="CHEBI:60240"/>
    </cofactor>
</comment>
<comment type="subcellular location">
    <subcellularLocation>
        <location evidence="1">Cytoplasm</location>
    </subcellularLocation>
</comment>
<comment type="similarity">
    <text evidence="1">Belongs to the Maf family.</text>
</comment>
<protein>
    <recommendedName>
        <fullName evidence="1">Nucleoside triphosphate pyrophosphatase</fullName>
        <ecNumber evidence="1">3.6.1.9</ecNumber>
    </recommendedName>
    <alternativeName>
        <fullName evidence="1">Nucleotide pyrophosphatase</fullName>
        <shortName evidence="1">Nucleotide PPase</shortName>
    </alternativeName>
</protein>
<accession>A2C7X9</accession>
<dbReference type="EC" id="3.6.1.9" evidence="1"/>
<dbReference type="EMBL" id="CP000554">
    <property type="protein sequence ID" value="ABM77589.1"/>
    <property type="molecule type" value="Genomic_DNA"/>
</dbReference>
<dbReference type="RefSeq" id="WP_011825500.1">
    <property type="nucleotide sequence ID" value="NC_008820.1"/>
</dbReference>
<dbReference type="SMR" id="A2C7X9"/>
<dbReference type="STRING" id="59922.P9303_08381"/>
<dbReference type="KEGG" id="pmf:P9303_08381"/>
<dbReference type="HOGENOM" id="CLU_040416_1_2_3"/>
<dbReference type="BioCyc" id="PMAR59922:G1G80-755-MONOMER"/>
<dbReference type="Proteomes" id="UP000002274">
    <property type="component" value="Chromosome"/>
</dbReference>
<dbReference type="GO" id="GO:0005737">
    <property type="term" value="C:cytoplasm"/>
    <property type="evidence" value="ECO:0007669"/>
    <property type="project" value="UniProtKB-SubCell"/>
</dbReference>
<dbReference type="GO" id="GO:0047429">
    <property type="term" value="F:nucleoside triphosphate diphosphatase activity"/>
    <property type="evidence" value="ECO:0007669"/>
    <property type="project" value="UniProtKB-EC"/>
</dbReference>
<dbReference type="GO" id="GO:0009117">
    <property type="term" value="P:nucleotide metabolic process"/>
    <property type="evidence" value="ECO:0007669"/>
    <property type="project" value="UniProtKB-KW"/>
</dbReference>
<dbReference type="CDD" id="cd00555">
    <property type="entry name" value="Maf"/>
    <property type="match status" value="1"/>
</dbReference>
<dbReference type="Gene3D" id="3.90.950.10">
    <property type="match status" value="1"/>
</dbReference>
<dbReference type="HAMAP" id="MF_00528">
    <property type="entry name" value="Maf"/>
    <property type="match status" value="1"/>
</dbReference>
<dbReference type="InterPro" id="IPR029001">
    <property type="entry name" value="ITPase-like_fam"/>
</dbReference>
<dbReference type="InterPro" id="IPR003697">
    <property type="entry name" value="Maf-like"/>
</dbReference>
<dbReference type="NCBIfam" id="TIGR00172">
    <property type="entry name" value="maf"/>
    <property type="match status" value="1"/>
</dbReference>
<dbReference type="PANTHER" id="PTHR43213">
    <property type="entry name" value="BIFUNCTIONAL DTTP/UTP PYROPHOSPHATASE/METHYLTRANSFERASE PROTEIN-RELATED"/>
    <property type="match status" value="1"/>
</dbReference>
<dbReference type="PANTHER" id="PTHR43213:SF5">
    <property type="entry name" value="BIFUNCTIONAL DTTP_UTP PYROPHOSPHATASE_METHYLTRANSFERASE PROTEIN-RELATED"/>
    <property type="match status" value="1"/>
</dbReference>
<dbReference type="Pfam" id="PF02545">
    <property type="entry name" value="Maf"/>
    <property type="match status" value="1"/>
</dbReference>
<dbReference type="PIRSF" id="PIRSF006305">
    <property type="entry name" value="Maf"/>
    <property type="match status" value="1"/>
</dbReference>
<dbReference type="SUPFAM" id="SSF52972">
    <property type="entry name" value="ITPase-like"/>
    <property type="match status" value="1"/>
</dbReference>
<sequence length="186" mass="20044">MLMLASASPARHRLLQQALIPHQVMVSGVDEETIHHLDPVRLVQHLAEAKAGVVRQQIEAALPVLGCDSVLEFDGTVFGKPATAVEASSRWQRMAGAWGLLHTGHCLLSVNGERLSETVTTRVLFSALSDSEIEAYVATGEPLLCAGGFALEGQGGLMVERLEGCFSNVIGLSLPLLRRWLLVINE</sequence>
<evidence type="ECO:0000255" key="1">
    <source>
        <dbReference type="HAMAP-Rule" id="MF_00528"/>
    </source>
</evidence>
<gene>
    <name type="ordered locus">P9303_08381</name>
</gene>
<reference key="1">
    <citation type="journal article" date="2007" name="PLoS Genet.">
        <title>Patterns and implications of gene gain and loss in the evolution of Prochlorococcus.</title>
        <authorList>
            <person name="Kettler G.C."/>
            <person name="Martiny A.C."/>
            <person name="Huang K."/>
            <person name="Zucker J."/>
            <person name="Coleman M.L."/>
            <person name="Rodrigue S."/>
            <person name="Chen F."/>
            <person name="Lapidus A."/>
            <person name="Ferriera S."/>
            <person name="Johnson J."/>
            <person name="Steglich C."/>
            <person name="Church G.M."/>
            <person name="Richardson P."/>
            <person name="Chisholm S.W."/>
        </authorList>
    </citation>
    <scope>NUCLEOTIDE SEQUENCE [LARGE SCALE GENOMIC DNA]</scope>
    <source>
        <strain>MIT 9303</strain>
    </source>
</reference>
<name>NTPP_PROM3</name>
<keyword id="KW-0963">Cytoplasm</keyword>
<keyword id="KW-0378">Hydrolase</keyword>
<keyword id="KW-0546">Nucleotide metabolism</keyword>
<organism>
    <name type="scientific">Prochlorococcus marinus (strain MIT 9303)</name>
    <dbReference type="NCBI Taxonomy" id="59922"/>
    <lineage>
        <taxon>Bacteria</taxon>
        <taxon>Bacillati</taxon>
        <taxon>Cyanobacteriota</taxon>
        <taxon>Cyanophyceae</taxon>
        <taxon>Synechococcales</taxon>
        <taxon>Prochlorococcaceae</taxon>
        <taxon>Prochlorococcus</taxon>
    </lineage>
</organism>
<proteinExistence type="inferred from homology"/>